<evidence type="ECO:0000255" key="1">
    <source>
        <dbReference type="HAMAP-Rule" id="MF_00259"/>
    </source>
</evidence>
<dbReference type="EC" id="2.1.2.10" evidence="1"/>
<dbReference type="EMBL" id="AM420293">
    <property type="protein sequence ID" value="CAM04886.1"/>
    <property type="molecule type" value="Genomic_DNA"/>
</dbReference>
<dbReference type="RefSeq" id="WP_009948208.1">
    <property type="nucleotide sequence ID" value="NC_009142.1"/>
</dbReference>
<dbReference type="SMR" id="A4FLG1"/>
<dbReference type="STRING" id="405948.SACE_5701"/>
<dbReference type="KEGG" id="sen:SACE_5701"/>
<dbReference type="eggNOG" id="COG0404">
    <property type="taxonomic scope" value="Bacteria"/>
</dbReference>
<dbReference type="HOGENOM" id="CLU_007884_10_2_11"/>
<dbReference type="OrthoDB" id="9774591at2"/>
<dbReference type="Proteomes" id="UP000006728">
    <property type="component" value="Chromosome"/>
</dbReference>
<dbReference type="GO" id="GO:0005829">
    <property type="term" value="C:cytosol"/>
    <property type="evidence" value="ECO:0007669"/>
    <property type="project" value="TreeGrafter"/>
</dbReference>
<dbReference type="GO" id="GO:0005960">
    <property type="term" value="C:glycine cleavage complex"/>
    <property type="evidence" value="ECO:0007669"/>
    <property type="project" value="InterPro"/>
</dbReference>
<dbReference type="GO" id="GO:0004047">
    <property type="term" value="F:aminomethyltransferase activity"/>
    <property type="evidence" value="ECO:0007669"/>
    <property type="project" value="UniProtKB-UniRule"/>
</dbReference>
<dbReference type="GO" id="GO:0008483">
    <property type="term" value="F:transaminase activity"/>
    <property type="evidence" value="ECO:0007669"/>
    <property type="project" value="UniProtKB-KW"/>
</dbReference>
<dbReference type="GO" id="GO:0019464">
    <property type="term" value="P:glycine decarboxylation via glycine cleavage system"/>
    <property type="evidence" value="ECO:0007669"/>
    <property type="project" value="UniProtKB-UniRule"/>
</dbReference>
<dbReference type="FunFam" id="2.40.30.110:FF:000003">
    <property type="entry name" value="Aminomethyltransferase"/>
    <property type="match status" value="1"/>
</dbReference>
<dbReference type="FunFam" id="3.30.70.1400:FF:000001">
    <property type="entry name" value="Aminomethyltransferase"/>
    <property type="match status" value="1"/>
</dbReference>
<dbReference type="FunFam" id="4.10.1250.10:FF:000001">
    <property type="entry name" value="Aminomethyltransferase"/>
    <property type="match status" value="1"/>
</dbReference>
<dbReference type="Gene3D" id="2.40.30.110">
    <property type="entry name" value="Aminomethyltransferase beta-barrel domains"/>
    <property type="match status" value="1"/>
</dbReference>
<dbReference type="Gene3D" id="3.30.70.1400">
    <property type="entry name" value="Aminomethyltransferase beta-barrel domains"/>
    <property type="match status" value="1"/>
</dbReference>
<dbReference type="Gene3D" id="4.10.1250.10">
    <property type="entry name" value="Aminomethyltransferase fragment"/>
    <property type="match status" value="1"/>
</dbReference>
<dbReference type="Gene3D" id="3.30.1360.120">
    <property type="entry name" value="Probable tRNA modification gtpase trme, domain 1"/>
    <property type="match status" value="1"/>
</dbReference>
<dbReference type="HAMAP" id="MF_00259">
    <property type="entry name" value="GcvT"/>
    <property type="match status" value="1"/>
</dbReference>
<dbReference type="InterPro" id="IPR006223">
    <property type="entry name" value="GCS_T"/>
</dbReference>
<dbReference type="InterPro" id="IPR022903">
    <property type="entry name" value="GCS_T_bac"/>
</dbReference>
<dbReference type="InterPro" id="IPR013977">
    <property type="entry name" value="GCST_C"/>
</dbReference>
<dbReference type="InterPro" id="IPR006222">
    <property type="entry name" value="GCV_T_N"/>
</dbReference>
<dbReference type="InterPro" id="IPR028896">
    <property type="entry name" value="GcvT/YgfZ/DmdA"/>
</dbReference>
<dbReference type="InterPro" id="IPR029043">
    <property type="entry name" value="GcvT/YgfZ_C"/>
</dbReference>
<dbReference type="InterPro" id="IPR027266">
    <property type="entry name" value="TrmE/GcvT_dom1"/>
</dbReference>
<dbReference type="NCBIfam" id="TIGR00528">
    <property type="entry name" value="gcvT"/>
    <property type="match status" value="1"/>
</dbReference>
<dbReference type="NCBIfam" id="NF001567">
    <property type="entry name" value="PRK00389.1"/>
    <property type="match status" value="1"/>
</dbReference>
<dbReference type="PANTHER" id="PTHR43757">
    <property type="entry name" value="AMINOMETHYLTRANSFERASE"/>
    <property type="match status" value="1"/>
</dbReference>
<dbReference type="PANTHER" id="PTHR43757:SF2">
    <property type="entry name" value="AMINOMETHYLTRANSFERASE, MITOCHONDRIAL"/>
    <property type="match status" value="1"/>
</dbReference>
<dbReference type="Pfam" id="PF01571">
    <property type="entry name" value="GCV_T"/>
    <property type="match status" value="1"/>
</dbReference>
<dbReference type="Pfam" id="PF08669">
    <property type="entry name" value="GCV_T_C"/>
    <property type="match status" value="1"/>
</dbReference>
<dbReference type="PIRSF" id="PIRSF006487">
    <property type="entry name" value="GcvT"/>
    <property type="match status" value="1"/>
</dbReference>
<dbReference type="SUPFAM" id="SSF101790">
    <property type="entry name" value="Aminomethyltransferase beta-barrel domain"/>
    <property type="match status" value="1"/>
</dbReference>
<dbReference type="SUPFAM" id="SSF103025">
    <property type="entry name" value="Folate-binding domain"/>
    <property type="match status" value="1"/>
</dbReference>
<organism>
    <name type="scientific">Saccharopolyspora erythraea (strain ATCC 11635 / DSM 40517 / JCM 4748 / NBRC 13426 / NCIMB 8594 / NRRL 2338)</name>
    <dbReference type="NCBI Taxonomy" id="405948"/>
    <lineage>
        <taxon>Bacteria</taxon>
        <taxon>Bacillati</taxon>
        <taxon>Actinomycetota</taxon>
        <taxon>Actinomycetes</taxon>
        <taxon>Pseudonocardiales</taxon>
        <taxon>Pseudonocardiaceae</taxon>
        <taxon>Saccharopolyspora</taxon>
    </lineage>
</organism>
<accession>A4FLG1</accession>
<comment type="function">
    <text evidence="1">The glycine cleavage system catalyzes the degradation of glycine.</text>
</comment>
<comment type="catalytic activity">
    <reaction evidence="1">
        <text>N(6)-[(R)-S(8)-aminomethyldihydrolipoyl]-L-lysyl-[protein] + (6S)-5,6,7,8-tetrahydrofolate = N(6)-[(R)-dihydrolipoyl]-L-lysyl-[protein] + (6R)-5,10-methylene-5,6,7,8-tetrahydrofolate + NH4(+)</text>
        <dbReference type="Rhea" id="RHEA:16945"/>
        <dbReference type="Rhea" id="RHEA-COMP:10475"/>
        <dbReference type="Rhea" id="RHEA-COMP:10492"/>
        <dbReference type="ChEBI" id="CHEBI:15636"/>
        <dbReference type="ChEBI" id="CHEBI:28938"/>
        <dbReference type="ChEBI" id="CHEBI:57453"/>
        <dbReference type="ChEBI" id="CHEBI:83100"/>
        <dbReference type="ChEBI" id="CHEBI:83143"/>
        <dbReference type="EC" id="2.1.2.10"/>
    </reaction>
</comment>
<comment type="subunit">
    <text evidence="1">The glycine cleavage system is composed of four proteins: P, T, L and H.</text>
</comment>
<comment type="similarity">
    <text evidence="1">Belongs to the GcvT family.</text>
</comment>
<proteinExistence type="inferred from homology"/>
<name>GCST_SACEN</name>
<reference key="1">
    <citation type="journal article" date="2007" name="Nat. Biotechnol.">
        <title>Complete genome sequence of the erythromycin-producing bacterium Saccharopolyspora erythraea NRRL23338.</title>
        <authorList>
            <person name="Oliynyk M."/>
            <person name="Samborskyy M."/>
            <person name="Lester J.B."/>
            <person name="Mironenko T."/>
            <person name="Scott N."/>
            <person name="Dickens S."/>
            <person name="Haydock S.F."/>
            <person name="Leadlay P.F."/>
        </authorList>
    </citation>
    <scope>NUCLEOTIDE SEQUENCE [LARGE SCALE GENOMIC DNA]</scope>
    <source>
        <strain>ATCC 11635 / DSM 40517 / JCM 4748 / NBRC 13426 / NCIMB 8594 / NRRL 2338</strain>
    </source>
</reference>
<gene>
    <name evidence="1" type="primary">gcvT</name>
    <name type="ordered locus">SACE_5701</name>
</gene>
<sequence length="367" mass="39090">MSSPRQTPLHEIHEALGATFTEFAGWRMPLRYTGDAAEHNAVRTAAGLFDLTHMGEIRISGPQAPEALDYALVANASAITVGRARYTMICNSEGGVLDDLIVYRLGEQEYLVVANAANAAVVSAELAERVARFEASHEDVSDDYALIAVQGPKAVDILAPLTSTDLSTVKYYAGYRSEVAGARVMLARTGYTGEDGFELFTSPADAPAVWQALADSGAEHGLRPAGLSCRDTLRLEAGMPLYGNELSAELTPFHANLGRVVKLDKPGDFVGKAPLAAAAEKPTERKLVGLRTDQRRAPRHGYRVLDAGGAEIGVVTSGAPSPTLGHPIAMAYVDRDHAEPGTALQVDIRGTAVPVEVVALPFYRRNA</sequence>
<feature type="chain" id="PRO_1000047695" description="Aminomethyltransferase">
    <location>
        <begin position="1"/>
        <end position="367"/>
    </location>
</feature>
<keyword id="KW-0032">Aminotransferase</keyword>
<keyword id="KW-1185">Reference proteome</keyword>
<keyword id="KW-0808">Transferase</keyword>
<protein>
    <recommendedName>
        <fullName evidence="1">Aminomethyltransferase</fullName>
        <ecNumber evidence="1">2.1.2.10</ecNumber>
    </recommendedName>
    <alternativeName>
        <fullName evidence="1">Glycine cleavage system T protein</fullName>
    </alternativeName>
</protein>